<proteinExistence type="inferred from homology"/>
<keyword id="KW-1185">Reference proteome</keyword>
<gene>
    <name type="ordered locus">PMI1174</name>
</gene>
<protein>
    <recommendedName>
        <fullName evidence="1">UPF0260 protein PMI1174</fullName>
    </recommendedName>
</protein>
<evidence type="ECO:0000255" key="1">
    <source>
        <dbReference type="HAMAP-Rule" id="MF_00676"/>
    </source>
</evidence>
<accession>B4EVW1</accession>
<reference key="1">
    <citation type="journal article" date="2008" name="J. Bacteriol.">
        <title>Complete genome sequence of uropathogenic Proteus mirabilis, a master of both adherence and motility.</title>
        <authorList>
            <person name="Pearson M.M."/>
            <person name="Sebaihia M."/>
            <person name="Churcher C."/>
            <person name="Quail M.A."/>
            <person name="Seshasayee A.S."/>
            <person name="Luscombe N.M."/>
            <person name="Abdellah Z."/>
            <person name="Arrosmith C."/>
            <person name="Atkin B."/>
            <person name="Chillingworth T."/>
            <person name="Hauser H."/>
            <person name="Jagels K."/>
            <person name="Moule S."/>
            <person name="Mungall K."/>
            <person name="Norbertczak H."/>
            <person name="Rabbinowitsch E."/>
            <person name="Walker D."/>
            <person name="Whithead S."/>
            <person name="Thomson N.R."/>
            <person name="Rather P.N."/>
            <person name="Parkhill J."/>
            <person name="Mobley H.L.T."/>
        </authorList>
    </citation>
    <scope>NUCLEOTIDE SEQUENCE [LARGE SCALE GENOMIC DNA]</scope>
    <source>
        <strain>HI4320</strain>
    </source>
</reference>
<sequence length="147" mass="17160">MTQAFWQTKTLDEMSDDEWESLCDGCGQCCLHKLMDDDTDEIYFTNVACNQLNIKTCQCSNYEDRFRYEPDCIKLTRYNLPTFEWLPMTCAYRLLAEGKPLADWHPLIAGNKAKMHQGNISVRYIAVPEVEVEDWEDHILNRPKGRG</sequence>
<feature type="chain" id="PRO_1000131625" description="UPF0260 protein PMI1174">
    <location>
        <begin position="1"/>
        <end position="147"/>
    </location>
</feature>
<dbReference type="EMBL" id="AM942759">
    <property type="protein sequence ID" value="CAR42506.1"/>
    <property type="molecule type" value="Genomic_DNA"/>
</dbReference>
<dbReference type="RefSeq" id="WP_004242788.1">
    <property type="nucleotide sequence ID" value="NC_010554.1"/>
</dbReference>
<dbReference type="EnsemblBacteria" id="CAR42506">
    <property type="protein sequence ID" value="CAR42506"/>
    <property type="gene ID" value="PMI1174"/>
</dbReference>
<dbReference type="GeneID" id="6801361"/>
<dbReference type="KEGG" id="pmr:PMI1174"/>
<dbReference type="eggNOG" id="COG2983">
    <property type="taxonomic scope" value="Bacteria"/>
</dbReference>
<dbReference type="HOGENOM" id="CLU_109769_2_0_6"/>
<dbReference type="Proteomes" id="UP000008319">
    <property type="component" value="Chromosome"/>
</dbReference>
<dbReference type="HAMAP" id="MF_00676">
    <property type="entry name" value="UPF0260"/>
    <property type="match status" value="1"/>
</dbReference>
<dbReference type="InterPro" id="IPR005358">
    <property type="entry name" value="Puta_zinc/iron-chelating_dom"/>
</dbReference>
<dbReference type="InterPro" id="IPR008228">
    <property type="entry name" value="UCP006173"/>
</dbReference>
<dbReference type="NCBIfam" id="NF003498">
    <property type="entry name" value="PRK05170.1-1"/>
    <property type="match status" value="1"/>
</dbReference>
<dbReference type="NCBIfam" id="NF003501">
    <property type="entry name" value="PRK05170.1-5"/>
    <property type="match status" value="1"/>
</dbReference>
<dbReference type="NCBIfam" id="NF003507">
    <property type="entry name" value="PRK05170.2-5"/>
    <property type="match status" value="1"/>
</dbReference>
<dbReference type="PANTHER" id="PTHR37421">
    <property type="entry name" value="UPF0260 PROTEIN YCGN"/>
    <property type="match status" value="1"/>
</dbReference>
<dbReference type="PANTHER" id="PTHR37421:SF1">
    <property type="entry name" value="UPF0260 PROTEIN YCGN"/>
    <property type="match status" value="1"/>
</dbReference>
<dbReference type="Pfam" id="PF03692">
    <property type="entry name" value="CxxCxxCC"/>
    <property type="match status" value="1"/>
</dbReference>
<dbReference type="PIRSF" id="PIRSF006173">
    <property type="entry name" value="UCP006173"/>
    <property type="match status" value="1"/>
</dbReference>
<organism>
    <name type="scientific">Proteus mirabilis (strain HI4320)</name>
    <dbReference type="NCBI Taxonomy" id="529507"/>
    <lineage>
        <taxon>Bacteria</taxon>
        <taxon>Pseudomonadati</taxon>
        <taxon>Pseudomonadota</taxon>
        <taxon>Gammaproteobacteria</taxon>
        <taxon>Enterobacterales</taxon>
        <taxon>Morganellaceae</taxon>
        <taxon>Proteus</taxon>
    </lineage>
</organism>
<name>Y1174_PROMH</name>
<comment type="similarity">
    <text evidence="1">Belongs to the UPF0260 family.</text>
</comment>